<name>UBIG_XANAC</name>
<sequence>MNSNTHAKSSNFHQSELDKFAALANRWWDADGPQKPLHALNPVRLEYVSARLEPAGARVLDVGCGGGLLSESMARLGAQVTAIDLAPELVKVARLHSLESGVQVDYRVQSVEDLAAEQAGSFDAVTCMEMLEHVPDPTAIIRACASLLKPGGKLFLSTLNRTPAAFALAVVGAEYIARLLPKGTHHYKDFIKPAELAAWLRNAGLQLEDVSGMLYEPWRNRARLSSRTEVNYLAYAVKP</sequence>
<comment type="function">
    <text evidence="1">O-methyltransferase that catalyzes the 2 O-methylation steps in the ubiquinone biosynthetic pathway.</text>
</comment>
<comment type="catalytic activity">
    <reaction evidence="1">
        <text>a 3-demethylubiquinol + S-adenosyl-L-methionine = a ubiquinol + S-adenosyl-L-homocysteine + H(+)</text>
        <dbReference type="Rhea" id="RHEA:44380"/>
        <dbReference type="Rhea" id="RHEA-COMP:9566"/>
        <dbReference type="Rhea" id="RHEA-COMP:10914"/>
        <dbReference type="ChEBI" id="CHEBI:15378"/>
        <dbReference type="ChEBI" id="CHEBI:17976"/>
        <dbReference type="ChEBI" id="CHEBI:57856"/>
        <dbReference type="ChEBI" id="CHEBI:59789"/>
        <dbReference type="ChEBI" id="CHEBI:84422"/>
        <dbReference type="EC" id="2.1.1.64"/>
    </reaction>
</comment>
<comment type="catalytic activity">
    <reaction evidence="1">
        <text>a 3-(all-trans-polyprenyl)benzene-1,2-diol + S-adenosyl-L-methionine = a 2-methoxy-6-(all-trans-polyprenyl)phenol + S-adenosyl-L-homocysteine + H(+)</text>
        <dbReference type="Rhea" id="RHEA:31411"/>
        <dbReference type="Rhea" id="RHEA-COMP:9550"/>
        <dbReference type="Rhea" id="RHEA-COMP:9551"/>
        <dbReference type="ChEBI" id="CHEBI:15378"/>
        <dbReference type="ChEBI" id="CHEBI:57856"/>
        <dbReference type="ChEBI" id="CHEBI:59789"/>
        <dbReference type="ChEBI" id="CHEBI:62729"/>
        <dbReference type="ChEBI" id="CHEBI:62731"/>
        <dbReference type="EC" id="2.1.1.222"/>
    </reaction>
</comment>
<comment type="pathway">
    <text evidence="1">Cofactor biosynthesis; ubiquinone biosynthesis.</text>
</comment>
<comment type="similarity">
    <text evidence="1">Belongs to the methyltransferase superfamily. UbiG/COQ3 family.</text>
</comment>
<reference key="1">
    <citation type="journal article" date="2002" name="Nature">
        <title>Comparison of the genomes of two Xanthomonas pathogens with differing host specificities.</title>
        <authorList>
            <person name="da Silva A.C.R."/>
            <person name="Ferro J.A."/>
            <person name="Reinach F.C."/>
            <person name="Farah C.S."/>
            <person name="Furlan L.R."/>
            <person name="Quaggio R.B."/>
            <person name="Monteiro-Vitorello C.B."/>
            <person name="Van Sluys M.A."/>
            <person name="Almeida N.F. Jr."/>
            <person name="Alves L.M.C."/>
            <person name="do Amaral A.M."/>
            <person name="Bertolini M.C."/>
            <person name="Camargo L.E.A."/>
            <person name="Camarotte G."/>
            <person name="Cannavan F."/>
            <person name="Cardozo J."/>
            <person name="Chambergo F."/>
            <person name="Ciapina L.P."/>
            <person name="Cicarelli R.M.B."/>
            <person name="Coutinho L.L."/>
            <person name="Cursino-Santos J.R."/>
            <person name="El-Dorry H."/>
            <person name="Faria J.B."/>
            <person name="Ferreira A.J.S."/>
            <person name="Ferreira R.C.C."/>
            <person name="Ferro M.I.T."/>
            <person name="Formighieri E.F."/>
            <person name="Franco M.C."/>
            <person name="Greggio C.C."/>
            <person name="Gruber A."/>
            <person name="Katsuyama A.M."/>
            <person name="Kishi L.T."/>
            <person name="Leite R.P."/>
            <person name="Lemos E.G.M."/>
            <person name="Lemos M.V.F."/>
            <person name="Locali E.C."/>
            <person name="Machado M.A."/>
            <person name="Madeira A.M.B.N."/>
            <person name="Martinez-Rossi N.M."/>
            <person name="Martins E.C."/>
            <person name="Meidanis J."/>
            <person name="Menck C.F.M."/>
            <person name="Miyaki C.Y."/>
            <person name="Moon D.H."/>
            <person name="Moreira L.M."/>
            <person name="Novo M.T.M."/>
            <person name="Okura V.K."/>
            <person name="Oliveira M.C."/>
            <person name="Oliveira V.R."/>
            <person name="Pereira H.A."/>
            <person name="Rossi A."/>
            <person name="Sena J.A.D."/>
            <person name="Silva C."/>
            <person name="de Souza R.F."/>
            <person name="Spinola L.A.F."/>
            <person name="Takita M.A."/>
            <person name="Tamura R.E."/>
            <person name="Teixeira E.C."/>
            <person name="Tezza R.I.D."/>
            <person name="Trindade dos Santos M."/>
            <person name="Truffi D."/>
            <person name="Tsai S.M."/>
            <person name="White F.F."/>
            <person name="Setubal J.C."/>
            <person name="Kitajima J.P."/>
        </authorList>
    </citation>
    <scope>NUCLEOTIDE SEQUENCE [LARGE SCALE GENOMIC DNA]</scope>
    <source>
        <strain>306</strain>
    </source>
</reference>
<keyword id="KW-0489">Methyltransferase</keyword>
<keyword id="KW-0949">S-adenosyl-L-methionine</keyword>
<keyword id="KW-0808">Transferase</keyword>
<keyword id="KW-0831">Ubiquinone biosynthesis</keyword>
<protein>
    <recommendedName>
        <fullName evidence="1">Ubiquinone biosynthesis O-methyltransferase</fullName>
    </recommendedName>
    <alternativeName>
        <fullName evidence="1">2-polyprenyl-6-hydroxyphenol methylase</fullName>
        <ecNumber evidence="1">2.1.1.222</ecNumber>
    </alternativeName>
    <alternativeName>
        <fullName evidence="1">3-demethylubiquinone 3-O-methyltransferase</fullName>
        <ecNumber evidence="1">2.1.1.64</ecNumber>
    </alternativeName>
</protein>
<proteinExistence type="inferred from homology"/>
<organism>
    <name type="scientific">Xanthomonas axonopodis pv. citri (strain 306)</name>
    <dbReference type="NCBI Taxonomy" id="190486"/>
    <lineage>
        <taxon>Bacteria</taxon>
        <taxon>Pseudomonadati</taxon>
        <taxon>Pseudomonadota</taxon>
        <taxon>Gammaproteobacteria</taxon>
        <taxon>Lysobacterales</taxon>
        <taxon>Lysobacteraceae</taxon>
        <taxon>Xanthomonas</taxon>
    </lineage>
</organism>
<gene>
    <name evidence="1" type="primary">ubiG</name>
    <name type="ordered locus">XAC2377</name>
</gene>
<dbReference type="EC" id="2.1.1.222" evidence="1"/>
<dbReference type="EC" id="2.1.1.64" evidence="1"/>
<dbReference type="EMBL" id="AE008923">
    <property type="protein sequence ID" value="AAM37229.1"/>
    <property type="molecule type" value="Genomic_DNA"/>
</dbReference>
<dbReference type="RefSeq" id="WP_003486071.1">
    <property type="nucleotide sequence ID" value="NC_003919.1"/>
</dbReference>
<dbReference type="SMR" id="Q8PK00"/>
<dbReference type="GeneID" id="66911490"/>
<dbReference type="KEGG" id="xac:XAC2377"/>
<dbReference type="eggNOG" id="COG2227">
    <property type="taxonomic scope" value="Bacteria"/>
</dbReference>
<dbReference type="HOGENOM" id="CLU_042432_5_0_6"/>
<dbReference type="UniPathway" id="UPA00232"/>
<dbReference type="Proteomes" id="UP000000576">
    <property type="component" value="Chromosome"/>
</dbReference>
<dbReference type="GO" id="GO:0102208">
    <property type="term" value="F:2-polyprenyl-6-hydroxyphenol methylase activity"/>
    <property type="evidence" value="ECO:0007669"/>
    <property type="project" value="UniProtKB-EC"/>
</dbReference>
<dbReference type="GO" id="GO:0061542">
    <property type="term" value="F:3-demethylubiquinol 3-O-methyltransferase activity"/>
    <property type="evidence" value="ECO:0007669"/>
    <property type="project" value="UniProtKB-UniRule"/>
</dbReference>
<dbReference type="GO" id="GO:0010420">
    <property type="term" value="F:polyprenyldihydroxybenzoate methyltransferase activity"/>
    <property type="evidence" value="ECO:0007669"/>
    <property type="project" value="InterPro"/>
</dbReference>
<dbReference type="GO" id="GO:0032259">
    <property type="term" value="P:methylation"/>
    <property type="evidence" value="ECO:0007669"/>
    <property type="project" value="UniProtKB-KW"/>
</dbReference>
<dbReference type="CDD" id="cd02440">
    <property type="entry name" value="AdoMet_MTases"/>
    <property type="match status" value="1"/>
</dbReference>
<dbReference type="FunFam" id="3.40.50.150:FF:000028">
    <property type="entry name" value="Ubiquinone biosynthesis O-methyltransferase"/>
    <property type="match status" value="1"/>
</dbReference>
<dbReference type="Gene3D" id="3.40.50.150">
    <property type="entry name" value="Vaccinia Virus protein VP39"/>
    <property type="match status" value="1"/>
</dbReference>
<dbReference type="HAMAP" id="MF_00472">
    <property type="entry name" value="UbiG"/>
    <property type="match status" value="1"/>
</dbReference>
<dbReference type="InterPro" id="IPR029063">
    <property type="entry name" value="SAM-dependent_MTases_sf"/>
</dbReference>
<dbReference type="InterPro" id="IPR010233">
    <property type="entry name" value="UbiG_MeTrfase"/>
</dbReference>
<dbReference type="NCBIfam" id="TIGR01983">
    <property type="entry name" value="UbiG"/>
    <property type="match status" value="1"/>
</dbReference>
<dbReference type="PANTHER" id="PTHR43464">
    <property type="entry name" value="METHYLTRANSFERASE"/>
    <property type="match status" value="1"/>
</dbReference>
<dbReference type="PANTHER" id="PTHR43464:SF19">
    <property type="entry name" value="UBIQUINONE BIOSYNTHESIS O-METHYLTRANSFERASE, MITOCHONDRIAL"/>
    <property type="match status" value="1"/>
</dbReference>
<dbReference type="Pfam" id="PF13489">
    <property type="entry name" value="Methyltransf_23"/>
    <property type="match status" value="1"/>
</dbReference>
<dbReference type="SUPFAM" id="SSF53335">
    <property type="entry name" value="S-adenosyl-L-methionine-dependent methyltransferases"/>
    <property type="match status" value="1"/>
</dbReference>
<evidence type="ECO:0000255" key="1">
    <source>
        <dbReference type="HAMAP-Rule" id="MF_00472"/>
    </source>
</evidence>
<accession>Q8PK00</accession>
<feature type="chain" id="PRO_0000193409" description="Ubiquinone biosynthesis O-methyltransferase">
    <location>
        <begin position="1"/>
        <end position="239"/>
    </location>
</feature>
<feature type="binding site" evidence="1">
    <location>
        <position position="44"/>
    </location>
    <ligand>
        <name>S-adenosyl-L-methionine</name>
        <dbReference type="ChEBI" id="CHEBI:59789"/>
    </ligand>
</feature>
<feature type="binding site" evidence="1">
    <location>
        <position position="63"/>
    </location>
    <ligand>
        <name>S-adenosyl-L-methionine</name>
        <dbReference type="ChEBI" id="CHEBI:59789"/>
    </ligand>
</feature>
<feature type="binding site" evidence="1">
    <location>
        <position position="84"/>
    </location>
    <ligand>
        <name>S-adenosyl-L-methionine</name>
        <dbReference type="ChEBI" id="CHEBI:59789"/>
    </ligand>
</feature>
<feature type="binding site" evidence="1">
    <location>
        <position position="128"/>
    </location>
    <ligand>
        <name>S-adenosyl-L-methionine</name>
        <dbReference type="ChEBI" id="CHEBI:59789"/>
    </ligand>
</feature>